<feature type="chain" id="PRO_1000126724" description="Large ribosomal subunit protein bL31">
    <location>
        <begin position="1"/>
        <end position="74"/>
    </location>
</feature>
<feature type="binding site" evidence="1">
    <location>
        <position position="16"/>
    </location>
    <ligand>
        <name>Zn(2+)</name>
        <dbReference type="ChEBI" id="CHEBI:29105"/>
    </ligand>
</feature>
<feature type="binding site" evidence="1">
    <location>
        <position position="18"/>
    </location>
    <ligand>
        <name>Zn(2+)</name>
        <dbReference type="ChEBI" id="CHEBI:29105"/>
    </ligand>
</feature>
<feature type="binding site" evidence="1">
    <location>
        <position position="38"/>
    </location>
    <ligand>
        <name>Zn(2+)</name>
        <dbReference type="ChEBI" id="CHEBI:29105"/>
    </ligand>
</feature>
<feature type="binding site" evidence="1">
    <location>
        <position position="41"/>
    </location>
    <ligand>
        <name>Zn(2+)</name>
        <dbReference type="ChEBI" id="CHEBI:29105"/>
    </ligand>
</feature>
<reference key="1">
    <citation type="journal article" date="2007" name="Proc. Natl. Acad. Sci. U.S.A.">
        <title>Genome sequencing reveals complex secondary metabolome in the marine actinomycete Salinispora tropica.</title>
        <authorList>
            <person name="Udwary D.W."/>
            <person name="Zeigler L."/>
            <person name="Asolkar R.N."/>
            <person name="Singan V."/>
            <person name="Lapidus A."/>
            <person name="Fenical W."/>
            <person name="Jensen P.R."/>
            <person name="Moore B.S."/>
        </authorList>
    </citation>
    <scope>NUCLEOTIDE SEQUENCE [LARGE SCALE GENOMIC DNA]</scope>
    <source>
        <strain>ATCC BAA-916 / DSM 44818 / JCM 13857 / NBRC 105044 / CNB-440</strain>
    </source>
</reference>
<evidence type="ECO:0000255" key="1">
    <source>
        <dbReference type="HAMAP-Rule" id="MF_00501"/>
    </source>
</evidence>
<evidence type="ECO:0000305" key="2"/>
<name>RL31_SALTO</name>
<sequence length="74" mass="8067">MKPNSHPEYVTTEVACSCGNTFTTRSTAKGGSIHVETCSACHPFYTGKQRVLDTAGRVAKFQQKYAKVQAKKGK</sequence>
<dbReference type="EMBL" id="CP000667">
    <property type="protein sequence ID" value="ABP56076.1"/>
    <property type="molecule type" value="Genomic_DNA"/>
</dbReference>
<dbReference type="RefSeq" id="WP_012014851.1">
    <property type="nucleotide sequence ID" value="NC_009380.1"/>
</dbReference>
<dbReference type="SMR" id="A4XAX7"/>
<dbReference type="STRING" id="369723.Strop_3645"/>
<dbReference type="KEGG" id="stp:Strop_3645"/>
<dbReference type="PATRIC" id="fig|369723.5.peg.3760"/>
<dbReference type="eggNOG" id="COG0254">
    <property type="taxonomic scope" value="Bacteria"/>
</dbReference>
<dbReference type="HOGENOM" id="CLU_114306_4_0_11"/>
<dbReference type="Proteomes" id="UP000000235">
    <property type="component" value="Chromosome"/>
</dbReference>
<dbReference type="GO" id="GO:1990904">
    <property type="term" value="C:ribonucleoprotein complex"/>
    <property type="evidence" value="ECO:0007669"/>
    <property type="project" value="UniProtKB-KW"/>
</dbReference>
<dbReference type="GO" id="GO:0005840">
    <property type="term" value="C:ribosome"/>
    <property type="evidence" value="ECO:0007669"/>
    <property type="project" value="UniProtKB-KW"/>
</dbReference>
<dbReference type="GO" id="GO:0046872">
    <property type="term" value="F:metal ion binding"/>
    <property type="evidence" value="ECO:0007669"/>
    <property type="project" value="UniProtKB-KW"/>
</dbReference>
<dbReference type="GO" id="GO:0019843">
    <property type="term" value="F:rRNA binding"/>
    <property type="evidence" value="ECO:0007669"/>
    <property type="project" value="UniProtKB-KW"/>
</dbReference>
<dbReference type="GO" id="GO:0003735">
    <property type="term" value="F:structural constituent of ribosome"/>
    <property type="evidence" value="ECO:0007669"/>
    <property type="project" value="InterPro"/>
</dbReference>
<dbReference type="GO" id="GO:0006412">
    <property type="term" value="P:translation"/>
    <property type="evidence" value="ECO:0007669"/>
    <property type="project" value="UniProtKB-UniRule"/>
</dbReference>
<dbReference type="Gene3D" id="4.10.830.30">
    <property type="entry name" value="Ribosomal protein L31"/>
    <property type="match status" value="1"/>
</dbReference>
<dbReference type="HAMAP" id="MF_00501">
    <property type="entry name" value="Ribosomal_bL31_1"/>
    <property type="match status" value="1"/>
</dbReference>
<dbReference type="InterPro" id="IPR034704">
    <property type="entry name" value="Ribosomal_bL28/bL31-like_sf"/>
</dbReference>
<dbReference type="InterPro" id="IPR002150">
    <property type="entry name" value="Ribosomal_bL31"/>
</dbReference>
<dbReference type="InterPro" id="IPR027491">
    <property type="entry name" value="Ribosomal_bL31_A"/>
</dbReference>
<dbReference type="InterPro" id="IPR042105">
    <property type="entry name" value="Ribosomal_bL31_sf"/>
</dbReference>
<dbReference type="NCBIfam" id="TIGR00105">
    <property type="entry name" value="L31"/>
    <property type="match status" value="1"/>
</dbReference>
<dbReference type="NCBIfam" id="NF000612">
    <property type="entry name" value="PRK00019.1"/>
    <property type="match status" value="1"/>
</dbReference>
<dbReference type="PANTHER" id="PTHR33280">
    <property type="entry name" value="50S RIBOSOMAL PROTEIN L31, CHLOROPLASTIC"/>
    <property type="match status" value="1"/>
</dbReference>
<dbReference type="PANTHER" id="PTHR33280:SF1">
    <property type="entry name" value="LARGE RIBOSOMAL SUBUNIT PROTEIN BL31C"/>
    <property type="match status" value="1"/>
</dbReference>
<dbReference type="Pfam" id="PF01197">
    <property type="entry name" value="Ribosomal_L31"/>
    <property type="match status" value="1"/>
</dbReference>
<dbReference type="PRINTS" id="PR01249">
    <property type="entry name" value="RIBOSOMALL31"/>
</dbReference>
<dbReference type="SUPFAM" id="SSF143800">
    <property type="entry name" value="L28p-like"/>
    <property type="match status" value="1"/>
</dbReference>
<dbReference type="PROSITE" id="PS01143">
    <property type="entry name" value="RIBOSOMAL_L31"/>
    <property type="match status" value="1"/>
</dbReference>
<protein>
    <recommendedName>
        <fullName evidence="1">Large ribosomal subunit protein bL31</fullName>
    </recommendedName>
    <alternativeName>
        <fullName evidence="2">50S ribosomal protein L31</fullName>
    </alternativeName>
</protein>
<accession>A4XAX7</accession>
<comment type="function">
    <text evidence="1">Binds the 23S rRNA.</text>
</comment>
<comment type="cofactor">
    <cofactor evidence="1">
        <name>Zn(2+)</name>
        <dbReference type="ChEBI" id="CHEBI:29105"/>
    </cofactor>
    <text evidence="1">Binds 1 zinc ion per subunit.</text>
</comment>
<comment type="subunit">
    <text evidence="1">Part of the 50S ribosomal subunit.</text>
</comment>
<comment type="similarity">
    <text evidence="1">Belongs to the bacterial ribosomal protein bL31 family. Type A subfamily.</text>
</comment>
<keyword id="KW-0479">Metal-binding</keyword>
<keyword id="KW-1185">Reference proteome</keyword>
<keyword id="KW-0687">Ribonucleoprotein</keyword>
<keyword id="KW-0689">Ribosomal protein</keyword>
<keyword id="KW-0694">RNA-binding</keyword>
<keyword id="KW-0699">rRNA-binding</keyword>
<keyword id="KW-0862">Zinc</keyword>
<gene>
    <name evidence="1" type="primary">rpmE</name>
    <name type="ordered locus">Strop_3645</name>
</gene>
<proteinExistence type="inferred from homology"/>
<organism>
    <name type="scientific">Salinispora tropica (strain ATCC BAA-916 / DSM 44818 / JCM 13857 / NBRC 105044 / CNB-440)</name>
    <dbReference type="NCBI Taxonomy" id="369723"/>
    <lineage>
        <taxon>Bacteria</taxon>
        <taxon>Bacillati</taxon>
        <taxon>Actinomycetota</taxon>
        <taxon>Actinomycetes</taxon>
        <taxon>Micromonosporales</taxon>
        <taxon>Micromonosporaceae</taxon>
        <taxon>Salinispora</taxon>
    </lineage>
</organism>